<reference key="1">
    <citation type="journal article" date="2008" name="Nat. Biotechnol.">
        <title>Genome sequencing and analysis of the filamentous fungus Penicillium chrysogenum.</title>
        <authorList>
            <person name="van den Berg M.A."/>
            <person name="Albang R."/>
            <person name="Albermann K."/>
            <person name="Badger J.H."/>
            <person name="Daran J.-M."/>
            <person name="Driessen A.J.M."/>
            <person name="Garcia-Estrada C."/>
            <person name="Fedorova N.D."/>
            <person name="Harris D.M."/>
            <person name="Heijne W.H.M."/>
            <person name="Joardar V.S."/>
            <person name="Kiel J.A.K.W."/>
            <person name="Kovalchuk A."/>
            <person name="Martin J.F."/>
            <person name="Nierman W.C."/>
            <person name="Nijland J.G."/>
            <person name="Pronk J.T."/>
            <person name="Roubos J.A."/>
            <person name="van der Klei I.J."/>
            <person name="van Peij N.N.M.E."/>
            <person name="Veenhuis M."/>
            <person name="von Doehren H."/>
            <person name="Wagner C."/>
            <person name="Wortman J.R."/>
            <person name="Bovenberg R.A.L."/>
        </authorList>
    </citation>
    <scope>NUCLEOTIDE SEQUENCE [LARGE SCALE GENOMIC DNA]</scope>
    <source>
        <strain>ATCC 28089 / DSM 1075 / NRRL 1951 / Wisconsin 54-1255</strain>
    </source>
</reference>
<reference key="2">
    <citation type="journal article" date="2014" name="Chem. Sci.">
        <title>Oxidative dearomatisation: the key step of sorbicillinoid biosynthesis.</title>
        <authorList>
            <person name="Fahad A.A."/>
            <person name="Abood A."/>
            <person name="Fisch K.M."/>
            <person name="Osipow A."/>
            <person name="Davison J."/>
            <person name="Avramovic M."/>
            <person name="Butts C.P."/>
            <person name="Piel J."/>
            <person name="Simpson T.J."/>
            <person name="Cox R.J."/>
        </authorList>
    </citation>
    <scope>FUNCTION</scope>
</reference>
<reference key="3">
    <citation type="journal article" date="2017" name="Microb. Biotechnol.">
        <title>Mechanism and regulation of sorbicillin biosynthesis by Penicillium chrysogenum.</title>
        <authorList>
            <person name="Guzman-Chavez F."/>
            <person name="Salo O."/>
            <person name="Nygaard Y."/>
            <person name="Lankhorst P.P."/>
            <person name="Bovenberg R.A.L."/>
            <person name="Driessen A.J.M."/>
        </authorList>
    </citation>
    <scope>FUNCTION</scope>
</reference>
<keyword id="KW-0012">Acyltransferase</keyword>
<keyword id="KW-0489">Methyltransferase</keyword>
<keyword id="KW-0511">Multifunctional enzyme</keyword>
<keyword id="KW-0521">NADP</keyword>
<keyword id="KW-0596">Phosphopantetheine</keyword>
<keyword id="KW-0597">Phosphoprotein</keyword>
<keyword id="KW-1185">Reference proteome</keyword>
<keyword id="KW-0808">Transferase</keyword>
<evidence type="ECO:0000250" key="1">
    <source>
        <dbReference type="UniProtKB" id="A0A0K0MCJ4"/>
    </source>
</evidence>
<evidence type="ECO:0000250" key="2">
    <source>
        <dbReference type="UniProtKB" id="G0R6S9"/>
    </source>
</evidence>
<evidence type="ECO:0000255" key="3"/>
<evidence type="ECO:0000255" key="4">
    <source>
        <dbReference type="PROSITE-ProRule" id="PRU00258"/>
    </source>
</evidence>
<evidence type="ECO:0000255" key="5">
    <source>
        <dbReference type="PROSITE-ProRule" id="PRU01348"/>
    </source>
</evidence>
<evidence type="ECO:0000255" key="6">
    <source>
        <dbReference type="PROSITE-ProRule" id="PRU01363"/>
    </source>
</evidence>
<evidence type="ECO:0000256" key="7">
    <source>
        <dbReference type="SAM" id="MobiDB-lite"/>
    </source>
</evidence>
<evidence type="ECO:0000269" key="8">
    <source>
    </source>
</evidence>
<evidence type="ECO:0000269" key="9">
    <source>
    </source>
</evidence>
<evidence type="ECO:0000303" key="10">
    <source>
    </source>
</evidence>
<evidence type="ECO:0000305" key="11"/>
<evidence type="ECO:0000305" key="12">
    <source>
    </source>
</evidence>
<evidence type="ECO:0000305" key="13">
    <source>
    </source>
</evidence>
<organism>
    <name type="scientific">Penicillium rubens (strain ATCC 28089 / DSM 1075 / NRRL 1951 / Wisconsin 54-1255)</name>
    <name type="common">Penicillium chrysogenum</name>
    <dbReference type="NCBI Taxonomy" id="500485"/>
    <lineage>
        <taxon>Eukaryota</taxon>
        <taxon>Fungi</taxon>
        <taxon>Dikarya</taxon>
        <taxon>Ascomycota</taxon>
        <taxon>Pezizomycotina</taxon>
        <taxon>Eurotiomycetes</taxon>
        <taxon>Eurotiomycetidae</taxon>
        <taxon>Eurotiales</taxon>
        <taxon>Aspergillaceae</taxon>
        <taxon>Penicillium</taxon>
        <taxon>Penicillium chrysogenum species complex</taxon>
    </lineage>
</organism>
<comment type="function">
    <text evidence="2 8 9">Non-reducing polyketide synthase; part of the gene cluster that mediates the biosynthesis of sorbicillinoids, a diverse group of yellow secondary metabolites that restrict growth of competing pathogenic fungi but not of bacteria (PubMed:25580210, PubMed:28618182). Sorbicillinoids biosynthesis requires the action of two PKSs (PubMed:25580210). SorA iteratively combines three acetyl units and the growing chain is modified by the ketoacyl reductase subunit, and optional by the enoyl reductase subunit in the second cycle (PubMed:25580210). The polyketide is then handed over to the PKS SorB, which adds three more acetyl units, and two methyl groups (PubMed:25580210). SorB releases an aldehyde, which undergoes spontaneous cyclization resulting in the formation of sorbicillin or 2',3'-dihydrosorbicillin (PubMed:25580210). The monooxygenase sorC oxidizes sorbicillin and 2',3'-dihydrosorbicillin to 2',3'-dihydrosorbicillinol and sorbicillinol, respectively (PubMed:28618182). The oxidoreductase sorD further converts sorbicillinol into oxosorbicillinol (PubMed:28618182). Sorbicillinol is the building block for the other sorbicillinoids such as disorbicillinol, bisvertinolon, and dihydrobisvertinolone (By similarity).</text>
</comment>
<comment type="cofactor">
    <cofactor evidence="3">
        <name>pantetheine 4'-phosphate</name>
        <dbReference type="ChEBI" id="CHEBI:47942"/>
    </cofactor>
    <text evidence="3">Binds 1 phosphopantetheine covalently.</text>
</comment>
<comment type="pathway">
    <text evidence="8">Secondary metabolite biosynthesis.</text>
</comment>
<comment type="domain">
    <text evidence="12 13">Multidomain protein; including an N-terminal starter unit:ACP transacylase (SAT) domain, a beta-ketoacyl synthase (KS) domain, a malonyl-CoA:ACP transacylase (MAT) domain, a product template domain, a acyl carrier protein (ACP) domain, a methyltransferase domain and a reductive NADPH-binding domain that is required for NADPH-dependent product release.</text>
</comment>
<sequence>MAENSGRGYQTPVHRDVFFSKSAPQSGNTADDIPNAASQPDTTSTMAMPSAKTLLLFGPGAMSLDQTYFSRILSFVKDDAASQWAVRAIEDIESGWDALSESIPKLQQTPGADHARRLAEWLRTGVITPRTTVANLPNAILGPLVIIAQLVEYLQYVESSQSANGDGKLFQLPSTAQTETVGCCLGVFSALVVSSSSSWAKFHHNAAAVLRKVFVLGALSDAQDISDVTGSSVSLIAFWRGGQSLSDLKKVLEICPGAYISVLYDDNRATVTTPSRIASDLKGHLSRAGFTASETEFHGRFHAGELYNNDLEALFSFCRKDPLFQLPDASSLILRTRVNSEKILADNDSLLEVASRAFLVEQFNWVKTFRSAVSSSLQDRTSKVIEFGPERCVPPTLLRRLNSQVTHYEFQSTGQRHSNPDMPSGCIDNDIAVIGMSCQVAGAQDLEQYWNILLEGRSQHKNLVPNERFAMETVFRPGQDGEDRKWYGNFIDDYDAFDYKFFRKSPREVLHMDPQQRLILQTAYQAVAQSGYYHRPGADRRIGCYIGCVANDYENNISHTSPTAFSATGALRSYIAGKVSHYFGWTGPGMMLDTACSASTVAIDLACRAILSGDCSAALAGGTNFYSTPMFFQNLAAGSFLSPTGQCKPFDAKADGYCRGEAIGAVFLKKLSNAIADGDQILGVISATAINQNQNDTPIFVPNPSSLTNVFQNVVGKAGLEVNDISVVEAHGTGTPVGDPAEYDSIRQVFGGSVRAGLKPLQLGSVKGLIGHTEGASGVVALIKMLLMMQESRIPPQASFTSMSASIKASPADNMEITKAALPWEDESKVALINNYGAAGSNASMVIKQAPKYPSGSEAVGHGSADLTSPTSTFRCPFYISGLDDKAIRAYATRLRQFIKNKVISRDVLGIENLSFNVNRQSNWSLSRGFVFGAESITELEEKLASFETFAVPSVRPVILCFGGQVSKSVGLDRGVFDKATVLRKYLDRCDSVCKSIGAGSIYPGIFQSEPILDPAVLQPLLLSMQYSCALSWIDCGVEPAALVGHSFGELTALCVSGILSLEDALKLVHGRSKIIKESWGPEKGSMIAVEADRNDVEKLLVASNARLGETERAGHATIACFNGPKSFTIAGSAAAIDAVQQTVSTLDIPIKHKRLDVTNAFHSTLVEHLRPQLEALGRSLSFGNAHIPLERATEQRETGPISPAYVAEHMRNPVYFDHAVQRLASQYPEAIWLEAGSNSTITTMTGRALGMPKGSTFQPVSVTGTTQGTRQLADVTMSLWNAGLPCSFWPHSRAQTYGYAPIMLPPYQFEKYRHWLEFKPPPKPVVIERLVYENGGVDQEAPAPGLYTFMGYGDKTETDCRFRINTTTKSYVDIVSGYTLGKTVQACPPIFGIDTAIQAITSVRLEVIAANELHPHIYNVLNHLPLVMDPTRAVFLEFERSGHAPEGWKFKLTSEADDSSKTVHLSGQLEFHRADDARSNFEFSRLERLVTHERCLRALESADDADEVIQGQSIYKVYSDLVSYAPKFRGLQRLVGRPSESAGRAVKRRSRDSWLDFALGETFSQVGSIWVNCLAPGRNTADDTVYIADGIEQWMRSPSLLRKISEGSYADHQSEWQILATHKRTEGDTFITDIFVFDSASRLLDEALLGVKFSARSMSELFTNVVIAAPPVPFPATIAPISSAPTENQYSSMTTSPPARAQVQKRNTKTELWAKLLPVLADISGLEPEEINETDALADIGIDSLMGMEMAREVETTFNCTLEQSELMSIFDVPGILAFLQSTLGLEGEDDASQSSDAASSSRNTPPSSNDGILATPSPKLEEEDISRSYIDLGNEVGLPAFAVIEAFRAANEQTDAYLKKWKCAGYLDGASQKQTRLCLVLTSDAFKQLGCDLVAAKPGEVLQPVPFVPRHHRFHEYLYKMLEETRIIDVDEGIITRTALPLPTQSSQAILDDLMSHHPDDGPSHQLTYNIGSRMADVLSGKADGPQLIFGDAKNRELVAAFYGELPFNKLYFQLMADFLSRIAESLRLCAQNRGPLKILEMGAGTGGTTKVLVPALAKLGIPVEYTFTDLSPSLVAQAKKKFKQYPFMKFAVHDIEQPPSDPLLIGSQNIVIASNAVHATHSLQVSTQNIRKFLRPDGFLMLLEMNSTLHWVDVVWGTLEGWWLFEDGRTHAVVDERQWEKELLDAGYKHVEWTDGKLPEVRVQRVRIALADDVEQNVGRLPPVAKQQVDDHDLSEEELNEKKQVADDYVKETIRGFTIPAYSGDLTDSSEYGKAVLVTGTTGSLGSHIIAHLVSLPSVDRVYCLNRPAIGGARAKDATPRDPLHRQLQSLESKSIALDASQLAKLKVIETDSSKAQLGLDTEEYKHLLCHVTHIIHNAFPVNGLRSLKQNEAQFTIMRNLVDLAAEISARRKATDFKFAFQFISSLSAVGKYPSVHAGEIQVPEEHLNIDSALPNGYGGAKVICERILHETLGQYPERFRAMTVRLGQLSGSMETGYWNHMEVLGFLFKSAQTLRSFPAVEGILTWLPLEQASATLADLLLRDAPDCHPVYHVDNPVRKPWAEIVPVLAQALGIPEKGIVPLDDWLRRVKAFPGEDPWDNPAGKAIDFFEHKFQHMSCGGVTMATNNAVEHSPTLRGVQPVADAVVMKYFQVWKDTGFLR</sequence>
<proteinExistence type="inferred from homology"/>
<gene>
    <name evidence="10" type="primary">sorB</name>
    <name type="ORF">Pc21g05070</name>
</gene>
<dbReference type="EC" id="2.3.1.-" evidence="8"/>
<dbReference type="EMBL" id="AM920436">
    <property type="protein sequence ID" value="CAP95404.1"/>
    <property type="molecule type" value="Genomic_DNA"/>
</dbReference>
<dbReference type="RefSeq" id="XP_002567553.1">
    <property type="nucleotide sequence ID" value="XM_002567507.1"/>
</dbReference>
<dbReference type="SMR" id="B6HN77"/>
<dbReference type="STRING" id="500485.B6HN77"/>
<dbReference type="VEuPathDB" id="FungiDB:PCH_Pc21g05070"/>
<dbReference type="eggNOG" id="KOG1178">
    <property type="taxonomic scope" value="Eukaryota"/>
</dbReference>
<dbReference type="eggNOG" id="KOG1202">
    <property type="taxonomic scope" value="Eukaryota"/>
</dbReference>
<dbReference type="HOGENOM" id="CLU_000022_6_2_1"/>
<dbReference type="OMA" id="DFFEHKF"/>
<dbReference type="OrthoDB" id="329835at2759"/>
<dbReference type="BioCyc" id="PCHR:PC21G05070-MONOMER"/>
<dbReference type="Proteomes" id="UP000000724">
    <property type="component" value="Contig Pc00c21"/>
</dbReference>
<dbReference type="GO" id="GO:0016746">
    <property type="term" value="F:acyltransferase activity"/>
    <property type="evidence" value="ECO:0007669"/>
    <property type="project" value="UniProtKB-KW"/>
</dbReference>
<dbReference type="GO" id="GO:0008168">
    <property type="term" value="F:methyltransferase activity"/>
    <property type="evidence" value="ECO:0007669"/>
    <property type="project" value="UniProtKB-KW"/>
</dbReference>
<dbReference type="GO" id="GO:0032259">
    <property type="term" value="P:methylation"/>
    <property type="evidence" value="ECO:0007669"/>
    <property type="project" value="UniProtKB-KW"/>
</dbReference>
<dbReference type="GO" id="GO:0044550">
    <property type="term" value="P:secondary metabolite biosynthetic process"/>
    <property type="evidence" value="ECO:0007669"/>
    <property type="project" value="UniProtKB-ARBA"/>
</dbReference>
<dbReference type="CDD" id="cd02440">
    <property type="entry name" value="AdoMet_MTases"/>
    <property type="match status" value="1"/>
</dbReference>
<dbReference type="CDD" id="cd00833">
    <property type="entry name" value="PKS"/>
    <property type="match status" value="1"/>
</dbReference>
<dbReference type="Gene3D" id="3.30.70.3290">
    <property type="match status" value="1"/>
</dbReference>
<dbReference type="Gene3D" id="3.40.47.10">
    <property type="match status" value="1"/>
</dbReference>
<dbReference type="Gene3D" id="1.10.1200.10">
    <property type="entry name" value="ACP-like"/>
    <property type="match status" value="1"/>
</dbReference>
<dbReference type="Gene3D" id="3.40.366.10">
    <property type="entry name" value="Malonyl-Coenzyme A Acyl Carrier Protein, domain 2"/>
    <property type="match status" value="2"/>
</dbReference>
<dbReference type="Gene3D" id="3.40.50.720">
    <property type="entry name" value="NAD(P)-binding Rossmann-like Domain"/>
    <property type="match status" value="1"/>
</dbReference>
<dbReference type="Gene3D" id="3.10.129.110">
    <property type="entry name" value="Polyketide synthase dehydratase"/>
    <property type="match status" value="1"/>
</dbReference>
<dbReference type="Gene3D" id="3.40.50.150">
    <property type="entry name" value="Vaccinia Virus protein VP39"/>
    <property type="match status" value="1"/>
</dbReference>
<dbReference type="InterPro" id="IPR001227">
    <property type="entry name" value="Ac_transferase_dom_sf"/>
</dbReference>
<dbReference type="InterPro" id="IPR036736">
    <property type="entry name" value="ACP-like_sf"/>
</dbReference>
<dbReference type="InterPro" id="IPR014043">
    <property type="entry name" value="Acyl_transferase_dom"/>
</dbReference>
<dbReference type="InterPro" id="IPR016035">
    <property type="entry name" value="Acyl_Trfase/lysoPLipase"/>
</dbReference>
<dbReference type="InterPro" id="IPR013120">
    <property type="entry name" value="Far_NAD-bd"/>
</dbReference>
<dbReference type="InterPro" id="IPR014031">
    <property type="entry name" value="Ketoacyl_synth_C"/>
</dbReference>
<dbReference type="InterPro" id="IPR014030">
    <property type="entry name" value="Ketoacyl_synth_N"/>
</dbReference>
<dbReference type="InterPro" id="IPR016036">
    <property type="entry name" value="Malonyl_transacylase_ACP-bd"/>
</dbReference>
<dbReference type="InterPro" id="IPR013217">
    <property type="entry name" value="Methyltransf_12"/>
</dbReference>
<dbReference type="InterPro" id="IPR036291">
    <property type="entry name" value="NAD(P)-bd_dom_sf"/>
</dbReference>
<dbReference type="InterPro" id="IPR020841">
    <property type="entry name" value="PKS_Beta-ketoAc_synthase_dom"/>
</dbReference>
<dbReference type="InterPro" id="IPR042104">
    <property type="entry name" value="PKS_dehydratase_sf"/>
</dbReference>
<dbReference type="InterPro" id="IPR049900">
    <property type="entry name" value="PKS_mFAS_DH"/>
</dbReference>
<dbReference type="InterPro" id="IPR050444">
    <property type="entry name" value="Polyketide_Synthase"/>
</dbReference>
<dbReference type="InterPro" id="IPR009081">
    <property type="entry name" value="PP-bd_ACP"/>
</dbReference>
<dbReference type="InterPro" id="IPR006162">
    <property type="entry name" value="Ppantetheine_attach_site"/>
</dbReference>
<dbReference type="InterPro" id="IPR029063">
    <property type="entry name" value="SAM-dependent_MTases_sf"/>
</dbReference>
<dbReference type="InterPro" id="IPR032088">
    <property type="entry name" value="SAT"/>
</dbReference>
<dbReference type="InterPro" id="IPR016039">
    <property type="entry name" value="Thiolase-like"/>
</dbReference>
<dbReference type="PANTHER" id="PTHR45681:SF6">
    <property type="entry name" value="POLYKETIDE SYNTHASE 37"/>
    <property type="match status" value="1"/>
</dbReference>
<dbReference type="PANTHER" id="PTHR45681">
    <property type="entry name" value="POLYKETIDE SYNTHASE 44-RELATED"/>
    <property type="match status" value="1"/>
</dbReference>
<dbReference type="Pfam" id="PF00698">
    <property type="entry name" value="Acyl_transf_1"/>
    <property type="match status" value="1"/>
</dbReference>
<dbReference type="Pfam" id="PF18558">
    <property type="entry name" value="HTH_51"/>
    <property type="match status" value="1"/>
</dbReference>
<dbReference type="Pfam" id="PF00109">
    <property type="entry name" value="ketoacyl-synt"/>
    <property type="match status" value="1"/>
</dbReference>
<dbReference type="Pfam" id="PF02801">
    <property type="entry name" value="Ketoacyl-synt_C"/>
    <property type="match status" value="1"/>
</dbReference>
<dbReference type="Pfam" id="PF08242">
    <property type="entry name" value="Methyltransf_12"/>
    <property type="match status" value="1"/>
</dbReference>
<dbReference type="Pfam" id="PF07993">
    <property type="entry name" value="NAD_binding_4"/>
    <property type="match status" value="1"/>
</dbReference>
<dbReference type="Pfam" id="PF00550">
    <property type="entry name" value="PP-binding"/>
    <property type="match status" value="1"/>
</dbReference>
<dbReference type="Pfam" id="PF16073">
    <property type="entry name" value="SAT"/>
    <property type="match status" value="1"/>
</dbReference>
<dbReference type="SMART" id="SM00827">
    <property type="entry name" value="PKS_AT"/>
    <property type="match status" value="1"/>
</dbReference>
<dbReference type="SMART" id="SM00825">
    <property type="entry name" value="PKS_KS"/>
    <property type="match status" value="1"/>
</dbReference>
<dbReference type="SUPFAM" id="SSF47336">
    <property type="entry name" value="ACP-like"/>
    <property type="match status" value="1"/>
</dbReference>
<dbReference type="SUPFAM" id="SSF52151">
    <property type="entry name" value="FabD/lysophospholipase-like"/>
    <property type="match status" value="1"/>
</dbReference>
<dbReference type="SUPFAM" id="SSF51735">
    <property type="entry name" value="NAD(P)-binding Rossmann-fold domains"/>
    <property type="match status" value="1"/>
</dbReference>
<dbReference type="SUPFAM" id="SSF55048">
    <property type="entry name" value="Probable ACP-binding domain of malonyl-CoA ACP transacylase"/>
    <property type="match status" value="1"/>
</dbReference>
<dbReference type="SUPFAM" id="SSF53335">
    <property type="entry name" value="S-adenosyl-L-methionine-dependent methyltransferases"/>
    <property type="match status" value="1"/>
</dbReference>
<dbReference type="SUPFAM" id="SSF53901">
    <property type="entry name" value="Thiolase-like"/>
    <property type="match status" value="1"/>
</dbReference>
<dbReference type="PROSITE" id="PS50075">
    <property type="entry name" value="CARRIER"/>
    <property type="match status" value="1"/>
</dbReference>
<dbReference type="PROSITE" id="PS52004">
    <property type="entry name" value="KS3_2"/>
    <property type="match status" value="1"/>
</dbReference>
<dbReference type="PROSITE" id="PS00012">
    <property type="entry name" value="PHOSPHOPANTETHEINE"/>
    <property type="match status" value="1"/>
</dbReference>
<dbReference type="PROSITE" id="PS52019">
    <property type="entry name" value="PKS_MFAS_DH"/>
    <property type="match status" value="1"/>
</dbReference>
<accession>B6HN77</accession>
<protein>
    <recommendedName>
        <fullName evidence="10">Non-reducing polyketide synthase sorB</fullName>
        <shortName evidence="11">NR-PKS sorB</shortName>
        <ecNumber evidence="8">2.3.1.-</ecNumber>
    </recommendedName>
    <alternativeName>
        <fullName evidence="10">Sorbicillinoid biosynthetic cluster protein B</fullName>
    </alternativeName>
</protein>
<feature type="chain" id="PRO_0000443836" description="Non-reducing polyketide synthase sorB">
    <location>
        <begin position="1"/>
        <end position="2664"/>
    </location>
</feature>
<feature type="domain" description="Ketosynthase family 3 (KS3)" evidence="5">
    <location>
        <begin position="428"/>
        <end position="849"/>
    </location>
</feature>
<feature type="domain" description="PKS/mFAS DH" evidence="6">
    <location>
        <begin position="1345"/>
        <end position="1663"/>
    </location>
</feature>
<feature type="domain" description="Carrier" evidence="4">
    <location>
        <begin position="1711"/>
        <end position="1785"/>
    </location>
</feature>
<feature type="region of interest" description="Disordered" evidence="7">
    <location>
        <begin position="21"/>
        <end position="45"/>
    </location>
</feature>
<feature type="region of interest" description="N-terminal acylcarrier protein transacylase domain (SAT)" evidence="1">
    <location>
        <begin position="112"/>
        <end position="281"/>
    </location>
</feature>
<feature type="region of interest" description="Malonyl-CoA:ACP transacylase (MAT) domain" evidence="3">
    <location>
        <begin position="961"/>
        <end position="1276"/>
    </location>
</feature>
<feature type="region of interest" description="N-terminal hotdog fold" evidence="6">
    <location>
        <begin position="1345"/>
        <end position="1477"/>
    </location>
</feature>
<feature type="region of interest" description="Product template (PT) domain" evidence="3">
    <location>
        <begin position="1376"/>
        <end position="1548"/>
    </location>
</feature>
<feature type="region of interest" description="C-terminal hotdog fold" evidence="6">
    <location>
        <begin position="1507"/>
        <end position="1663"/>
    </location>
</feature>
<feature type="region of interest" description="Disordered" evidence="7">
    <location>
        <begin position="1789"/>
        <end position="1820"/>
    </location>
</feature>
<feature type="region of interest" description="Methyltransferase domain" evidence="3">
    <location>
        <begin position="2015"/>
        <end position="2197"/>
    </location>
</feature>
<feature type="region of interest" description="NADPH-binding (R) domain" evidence="3">
    <location>
        <begin position="2281"/>
        <end position="2526"/>
    </location>
</feature>
<feature type="compositionally biased region" description="Polar residues" evidence="7">
    <location>
        <begin position="36"/>
        <end position="45"/>
    </location>
</feature>
<feature type="compositionally biased region" description="Low complexity" evidence="7">
    <location>
        <begin position="1794"/>
        <end position="1803"/>
    </location>
</feature>
<feature type="active site" description="Nucleophile; for transacylase activity" evidence="1">
    <location>
        <position position="184"/>
    </location>
</feature>
<feature type="active site" description="Proton donor/acceptor; for transacylase activity" evidence="1">
    <location>
        <position position="302"/>
    </location>
</feature>
<feature type="active site" description="For beta-ketoacyl synthase activity" evidence="5">
    <location>
        <position position="596"/>
    </location>
</feature>
<feature type="active site" description="For beta-ketoacyl synthase activity" evidence="5">
    <location>
        <position position="731"/>
    </location>
</feature>
<feature type="active site" description="For beta-ketoacyl synthase activity" evidence="5">
    <location>
        <position position="772"/>
    </location>
</feature>
<feature type="modified residue" description="O-(pantetheine 4'-phosphoryl)serine" evidence="4">
    <location>
        <position position="1745"/>
    </location>
</feature>
<name>SORB_PENRW</name>